<organism>
    <name type="scientific">Rubrobacter xylanophilus (strain DSM 9941 / JCM 11954 / NBRC 16129 / PRD-1)</name>
    <dbReference type="NCBI Taxonomy" id="266117"/>
    <lineage>
        <taxon>Bacteria</taxon>
        <taxon>Bacillati</taxon>
        <taxon>Actinomycetota</taxon>
        <taxon>Rubrobacteria</taxon>
        <taxon>Rubrobacterales</taxon>
        <taxon>Rubrobacteraceae</taxon>
        <taxon>Rubrobacter</taxon>
    </lineage>
</organism>
<dbReference type="EMBL" id="CP000386">
    <property type="protein sequence ID" value="ABG05109.1"/>
    <property type="molecule type" value="Genomic_DNA"/>
</dbReference>
<dbReference type="RefSeq" id="WP_011565124.1">
    <property type="nucleotide sequence ID" value="NC_008148.1"/>
</dbReference>
<dbReference type="SMR" id="Q1AU19"/>
<dbReference type="STRING" id="266117.Rxyl_2165"/>
<dbReference type="KEGG" id="rxy:Rxyl_2165"/>
<dbReference type="eggNOG" id="COG0081">
    <property type="taxonomic scope" value="Bacteria"/>
</dbReference>
<dbReference type="HOGENOM" id="CLU_062853_0_0_11"/>
<dbReference type="OrthoDB" id="9803740at2"/>
<dbReference type="PhylomeDB" id="Q1AU19"/>
<dbReference type="Proteomes" id="UP000006637">
    <property type="component" value="Chromosome"/>
</dbReference>
<dbReference type="GO" id="GO:0015934">
    <property type="term" value="C:large ribosomal subunit"/>
    <property type="evidence" value="ECO:0007669"/>
    <property type="project" value="InterPro"/>
</dbReference>
<dbReference type="GO" id="GO:0019843">
    <property type="term" value="F:rRNA binding"/>
    <property type="evidence" value="ECO:0007669"/>
    <property type="project" value="UniProtKB-UniRule"/>
</dbReference>
<dbReference type="GO" id="GO:0003735">
    <property type="term" value="F:structural constituent of ribosome"/>
    <property type="evidence" value="ECO:0007669"/>
    <property type="project" value="InterPro"/>
</dbReference>
<dbReference type="GO" id="GO:0000049">
    <property type="term" value="F:tRNA binding"/>
    <property type="evidence" value="ECO:0007669"/>
    <property type="project" value="UniProtKB-KW"/>
</dbReference>
<dbReference type="GO" id="GO:0006417">
    <property type="term" value="P:regulation of translation"/>
    <property type="evidence" value="ECO:0007669"/>
    <property type="project" value="UniProtKB-KW"/>
</dbReference>
<dbReference type="GO" id="GO:0006412">
    <property type="term" value="P:translation"/>
    <property type="evidence" value="ECO:0007669"/>
    <property type="project" value="UniProtKB-UniRule"/>
</dbReference>
<dbReference type="CDD" id="cd00403">
    <property type="entry name" value="Ribosomal_L1"/>
    <property type="match status" value="1"/>
</dbReference>
<dbReference type="FunFam" id="3.40.50.790:FF:000001">
    <property type="entry name" value="50S ribosomal protein L1"/>
    <property type="match status" value="1"/>
</dbReference>
<dbReference type="Gene3D" id="3.30.190.20">
    <property type="match status" value="1"/>
</dbReference>
<dbReference type="Gene3D" id="3.40.50.790">
    <property type="match status" value="1"/>
</dbReference>
<dbReference type="HAMAP" id="MF_01318_B">
    <property type="entry name" value="Ribosomal_uL1_B"/>
    <property type="match status" value="1"/>
</dbReference>
<dbReference type="InterPro" id="IPR005878">
    <property type="entry name" value="Ribosom_uL1_bac-type"/>
</dbReference>
<dbReference type="InterPro" id="IPR002143">
    <property type="entry name" value="Ribosomal_uL1"/>
</dbReference>
<dbReference type="InterPro" id="IPR023674">
    <property type="entry name" value="Ribosomal_uL1-like"/>
</dbReference>
<dbReference type="InterPro" id="IPR028364">
    <property type="entry name" value="Ribosomal_uL1/biogenesis"/>
</dbReference>
<dbReference type="InterPro" id="IPR016095">
    <property type="entry name" value="Ribosomal_uL1_3-a/b-sand"/>
</dbReference>
<dbReference type="InterPro" id="IPR023673">
    <property type="entry name" value="Ribosomal_uL1_CS"/>
</dbReference>
<dbReference type="NCBIfam" id="TIGR01169">
    <property type="entry name" value="rplA_bact"/>
    <property type="match status" value="1"/>
</dbReference>
<dbReference type="PANTHER" id="PTHR36427">
    <property type="entry name" value="54S RIBOSOMAL PROTEIN L1, MITOCHONDRIAL"/>
    <property type="match status" value="1"/>
</dbReference>
<dbReference type="PANTHER" id="PTHR36427:SF3">
    <property type="entry name" value="LARGE RIBOSOMAL SUBUNIT PROTEIN UL1M"/>
    <property type="match status" value="1"/>
</dbReference>
<dbReference type="Pfam" id="PF00687">
    <property type="entry name" value="Ribosomal_L1"/>
    <property type="match status" value="1"/>
</dbReference>
<dbReference type="PIRSF" id="PIRSF002155">
    <property type="entry name" value="Ribosomal_L1"/>
    <property type="match status" value="1"/>
</dbReference>
<dbReference type="SUPFAM" id="SSF56808">
    <property type="entry name" value="Ribosomal protein L1"/>
    <property type="match status" value="1"/>
</dbReference>
<dbReference type="PROSITE" id="PS01199">
    <property type="entry name" value="RIBOSOMAL_L1"/>
    <property type="match status" value="1"/>
</dbReference>
<protein>
    <recommendedName>
        <fullName evidence="1">Large ribosomal subunit protein uL1</fullName>
    </recommendedName>
    <alternativeName>
        <fullName evidence="2">50S ribosomal protein L1</fullName>
    </alternativeName>
</protein>
<reference key="1">
    <citation type="submission" date="2006-06" db="EMBL/GenBank/DDBJ databases">
        <title>Complete sequence of Rubrobacter xylanophilus DSM 9941.</title>
        <authorList>
            <consortium name="US DOE Joint Genome Institute"/>
            <person name="Copeland A."/>
            <person name="Lucas S."/>
            <person name="Lapidus A."/>
            <person name="Barry K."/>
            <person name="Detter J.C."/>
            <person name="Glavina del Rio T."/>
            <person name="Hammon N."/>
            <person name="Israni S."/>
            <person name="Dalin E."/>
            <person name="Tice H."/>
            <person name="Pitluck S."/>
            <person name="Munk A.C."/>
            <person name="Brettin T."/>
            <person name="Bruce D."/>
            <person name="Han C."/>
            <person name="Tapia R."/>
            <person name="Gilna P."/>
            <person name="Schmutz J."/>
            <person name="Larimer F."/>
            <person name="Land M."/>
            <person name="Hauser L."/>
            <person name="Kyrpides N."/>
            <person name="Lykidis A."/>
            <person name="da Costa M.S."/>
            <person name="Rainey F.A."/>
            <person name="Empadinhas N."/>
            <person name="Jolivet E."/>
            <person name="Battista J.R."/>
            <person name="Richardson P."/>
        </authorList>
    </citation>
    <scope>NUCLEOTIDE SEQUENCE [LARGE SCALE GENOMIC DNA]</scope>
    <source>
        <strain>DSM 9941 / JCM 11954 / NBRC 16129 / PRD-1</strain>
    </source>
</reference>
<proteinExistence type="inferred from homology"/>
<feature type="chain" id="PRO_0000308093" description="Large ribosomal subunit protein uL1">
    <location>
        <begin position="1"/>
        <end position="230"/>
    </location>
</feature>
<sequence>MAGKRLLEQRARVERERLYSPREALELLKELDGARFDETVEAHVHLNVDPRRADQMVRGTLMLPNGTGKTRRVAVFAVGEKAREAEEAGADIVGSEELAARIQNEGFMDFDVAVATPDQMSIVGRLGPILGPRGLMPNPKSGTVTMDVGRAVEEIKRGKVEYRVDRYGIIHTVLGKKSFDVDSLLENYFALREELVRARPAAVKGRYIKSVAFTTTMGPSVKVDPSVERE</sequence>
<accession>Q1AU19</accession>
<keyword id="KW-1185">Reference proteome</keyword>
<keyword id="KW-0678">Repressor</keyword>
<keyword id="KW-0687">Ribonucleoprotein</keyword>
<keyword id="KW-0689">Ribosomal protein</keyword>
<keyword id="KW-0694">RNA-binding</keyword>
<keyword id="KW-0699">rRNA-binding</keyword>
<keyword id="KW-0810">Translation regulation</keyword>
<keyword id="KW-0820">tRNA-binding</keyword>
<evidence type="ECO:0000255" key="1">
    <source>
        <dbReference type="HAMAP-Rule" id="MF_01318"/>
    </source>
</evidence>
<evidence type="ECO:0000305" key="2"/>
<gene>
    <name evidence="1" type="primary">rplA</name>
    <name type="ordered locus">Rxyl_2165</name>
</gene>
<comment type="function">
    <text evidence="1">Binds directly to 23S rRNA. The L1 stalk is quite mobile in the ribosome, and is involved in E site tRNA release.</text>
</comment>
<comment type="function">
    <text evidence="1">Protein L1 is also a translational repressor protein, it controls the translation of the L11 operon by binding to its mRNA.</text>
</comment>
<comment type="subunit">
    <text evidence="1">Part of the 50S ribosomal subunit.</text>
</comment>
<comment type="similarity">
    <text evidence="1">Belongs to the universal ribosomal protein uL1 family.</text>
</comment>
<name>RL1_RUBXD</name>